<organism>
    <name type="scientific">Homo sapiens</name>
    <name type="common">Human</name>
    <dbReference type="NCBI Taxonomy" id="9606"/>
    <lineage>
        <taxon>Eukaryota</taxon>
        <taxon>Metazoa</taxon>
        <taxon>Chordata</taxon>
        <taxon>Craniata</taxon>
        <taxon>Vertebrata</taxon>
        <taxon>Euteleostomi</taxon>
        <taxon>Mammalia</taxon>
        <taxon>Eutheria</taxon>
        <taxon>Euarchontoglires</taxon>
        <taxon>Primates</taxon>
        <taxon>Haplorrhini</taxon>
        <taxon>Catarrhini</taxon>
        <taxon>Hominidae</taxon>
        <taxon>Homo</taxon>
    </lineage>
</organism>
<sequence>MATPAGLERWVQDELHSVLGLSERHVAQFLIGTAQRCTSAEEFVQRLRDTDTLDLSGPARDFALRLWNKVPRKAVVEKPARAAEREARALLEKNRSYRLLEDSEESSEETVSRAGSSLQKKRKKRKHLRKKREEEEEEEASEKGKKKTGGSKQQTEKPESEDEWERTERERLQDLEERDAFAERVRQRDKDRTRNVLERSDKKAYEEAQKRLKMAEEDRKAMVPELRKKSRREYLAKREREKLEDLEAELADEEFLFGDVELSRHERQELKYKRRVRDLAREYRAAGEQEKLEATNRYHMPKETRGQPARAVDLVEEESGAPGEEQRRWEEARLGAASLKFGARDAASQEPKYQLVLEEEETIEFVRATQLQGDEEPSAPPTSTQAQQKESIQAVRRSLPVFPFREELLAAIANHQVLIIEGETGSGKTTQIPQYLFEEGYTNKGMKIACTQPRRVAAMSVAARVAREMGVKLGNEVGYSIRFEDCTSERTVLRYMTDGMLLREFLSEPDLASYSVVMVDEAHERTLHTDILFGLIKDVARFRPELKVLVASATMDTARFSTFFDDAPVFRIPGRRFPVDIFYTKAPEADYLEACVVSVLQIHVTQPPGDILVFLTGQEEIEAACEMLQDRCRRLGSKIRELLVLPIYANLPSDMQARIFQPTPPGARKVVVATNIAETSLTIEGIIYVLDPGFCKQKSYNPRTGMESLTVTPCSKASANQRAGRAGRVAAGKCFRLYTAWAYQHELEETTVPEIQRTSLGNVVLLLKSLGIHDLMHFDFLDPPPYETLLLALEQLYALGALNHLGELTTSGRKMAELPVDPMLSKMILASEKYSCSEEILTVAAMLSVNNSIFYRPKDKVVHADNARVNFFLPGGDHLVLLNVYTQWAESGYSSQWCYENFVQFRSMRRARDVREQLEGLLERVEVGLSSCQGDYIRVRKAITAGYFYHTARLTRSGYRTVKQQQTVFIHPNSSLFEQQPRWLLYHELVLTTKEFMRQVLEIESSWLLEVAPHYYKAKELEDPHAKKMPKKIGKTREELG</sequence>
<proteinExistence type="evidence at protein level"/>
<evidence type="ECO:0000255" key="1">
    <source>
        <dbReference type="PROSITE-ProRule" id="PRU00541"/>
    </source>
</evidence>
<evidence type="ECO:0000255" key="2">
    <source>
        <dbReference type="PROSITE-ProRule" id="PRU00542"/>
    </source>
</evidence>
<evidence type="ECO:0000256" key="3">
    <source>
        <dbReference type="SAM" id="MobiDB-lite"/>
    </source>
</evidence>
<evidence type="ECO:0000269" key="4">
    <source>
    </source>
</evidence>
<evidence type="ECO:0000269" key="5">
    <source>
    </source>
</evidence>
<evidence type="ECO:0000269" key="6">
    <source>
    </source>
</evidence>
<evidence type="ECO:0000269" key="7">
    <source>
    </source>
</evidence>
<evidence type="ECO:0000269" key="8">
    <source>
    </source>
</evidence>
<evidence type="ECO:0000269" key="9">
    <source>
    </source>
</evidence>
<evidence type="ECO:0000269" key="10">
    <source>
    </source>
</evidence>
<evidence type="ECO:0000269" key="11">
    <source>
    </source>
</evidence>
<evidence type="ECO:0000303" key="12">
    <source>
    </source>
</evidence>
<evidence type="ECO:0000303" key="13">
    <source>
    </source>
</evidence>
<evidence type="ECO:0000305" key="14"/>
<evidence type="ECO:0000305" key="15">
    <source>
    </source>
</evidence>
<evidence type="ECO:0007744" key="16">
    <source>
        <dbReference type="PDB" id="5Z56"/>
    </source>
</evidence>
<evidence type="ECO:0007744" key="17">
    <source>
        <dbReference type="PDB" id="5Z57"/>
    </source>
</evidence>
<evidence type="ECO:0007744" key="18">
    <source>
        <dbReference type="PDB" id="5Z58"/>
    </source>
</evidence>
<evidence type="ECO:0007744" key="19">
    <source>
        <dbReference type="PDB" id="7DVQ"/>
    </source>
</evidence>
<evidence type="ECO:0007744" key="20">
    <source>
    </source>
</evidence>
<evidence type="ECO:0007744" key="21">
    <source>
    </source>
</evidence>
<evidence type="ECO:0007744" key="22">
    <source>
    </source>
</evidence>
<evidence type="ECO:0007744" key="23">
    <source>
    </source>
</evidence>
<evidence type="ECO:0007744" key="24">
    <source>
    </source>
</evidence>
<evidence type="ECO:0007744" key="25">
    <source>
    </source>
</evidence>
<evidence type="ECO:0007744" key="26">
    <source>
    </source>
</evidence>
<evidence type="ECO:0007744" key="27">
    <source>
    </source>
</evidence>
<evidence type="ECO:0007829" key="28">
    <source>
        <dbReference type="PDB" id="7DVQ"/>
    </source>
</evidence>
<evidence type="ECO:0007829" key="29">
    <source>
        <dbReference type="PDB" id="7QTT"/>
    </source>
</evidence>
<accession>O60231</accession>
<accession>O60322</accession>
<accession>Q5JP45</accession>
<accession>Q969X7</accession>
<accession>Q96QC1</accession>
<gene>
    <name type="primary">DHX16</name>
    <name type="synonym">DBP2</name>
    <name type="synonym">DDX16</name>
    <name type="synonym">KIAA0577</name>
    <name evidence="12 13" type="synonym">PRP2</name>
</gene>
<keyword id="KW-0002">3D-structure</keyword>
<keyword id="KW-0067">ATP-binding</keyword>
<keyword id="KW-0963">Cytoplasm</keyword>
<keyword id="KW-0225">Disease variant</keyword>
<keyword id="KW-0347">Helicase</keyword>
<keyword id="KW-0378">Hydrolase</keyword>
<keyword id="KW-0391">Immunity</keyword>
<keyword id="KW-0399">Innate immunity</keyword>
<keyword id="KW-0507">mRNA processing</keyword>
<keyword id="KW-0508">mRNA splicing</keyword>
<keyword id="KW-0622">Neuropathy</keyword>
<keyword id="KW-0547">Nucleotide-binding</keyword>
<keyword id="KW-0539">Nucleus</keyword>
<keyword id="KW-0597">Phosphoprotein</keyword>
<keyword id="KW-1267">Proteomics identification</keyword>
<keyword id="KW-1185">Reference proteome</keyword>
<keyword id="KW-0747">Spliceosome</keyword>
<reference key="1">
    <citation type="journal article" date="1998" name="Nucleic Acids Res.">
        <title>Cloning and characterization of a human DEAH-box RNA helicase, a functional homolog of fission yeast Cdc28/Prp8.</title>
        <authorList>
            <person name="Imamura O."/>
            <person name="Saiki K."/>
            <person name="Tani T."/>
            <person name="Ohshima Y."/>
            <person name="Sugawara M."/>
            <person name="Furuichi Y."/>
        </authorList>
    </citation>
    <scope>NUCLEOTIDE SEQUENCE [MRNA]</scope>
</reference>
<reference key="2">
    <citation type="submission" date="1999-09" db="EMBL/GenBank/DDBJ databases">
        <title>Homo sapiens 2,229,817bp genomic DNA of 6p21.3 HLA class I region.</title>
        <authorList>
            <person name="Shiina S."/>
            <person name="Tamiya G."/>
            <person name="Oka A."/>
            <person name="Inoko H."/>
        </authorList>
    </citation>
    <scope>NUCLEOTIDE SEQUENCE [LARGE SCALE GENOMIC DNA]</scope>
</reference>
<reference key="3">
    <citation type="journal article" date="1998" name="DNA Res.">
        <title>Prediction of the coding sequences of unidentified human genes. IX. The complete sequences of 100 new cDNA clones from brain which can code for large proteins in vitro.</title>
        <authorList>
            <person name="Nagase T."/>
            <person name="Ishikawa K."/>
            <person name="Miyajima N."/>
            <person name="Tanaka A."/>
            <person name="Kotani H."/>
            <person name="Nomura N."/>
            <person name="Ohara O."/>
        </authorList>
    </citation>
    <scope>NUCLEOTIDE SEQUENCE [LARGE SCALE MRNA]</scope>
    <source>
        <tissue>Brain</tissue>
    </source>
</reference>
<reference key="4">
    <citation type="journal article" date="2003" name="Nature">
        <title>The DNA sequence and analysis of human chromosome 6.</title>
        <authorList>
            <person name="Mungall A.J."/>
            <person name="Palmer S.A."/>
            <person name="Sims S.K."/>
            <person name="Edwards C.A."/>
            <person name="Ashurst J.L."/>
            <person name="Wilming L."/>
            <person name="Jones M.C."/>
            <person name="Horton R."/>
            <person name="Hunt S.E."/>
            <person name="Scott C.E."/>
            <person name="Gilbert J.G.R."/>
            <person name="Clamp M.E."/>
            <person name="Bethel G."/>
            <person name="Milne S."/>
            <person name="Ainscough R."/>
            <person name="Almeida J.P."/>
            <person name="Ambrose K.D."/>
            <person name="Andrews T.D."/>
            <person name="Ashwell R.I.S."/>
            <person name="Babbage A.K."/>
            <person name="Bagguley C.L."/>
            <person name="Bailey J."/>
            <person name="Banerjee R."/>
            <person name="Barker D.J."/>
            <person name="Barlow K.F."/>
            <person name="Bates K."/>
            <person name="Beare D.M."/>
            <person name="Beasley H."/>
            <person name="Beasley O."/>
            <person name="Bird C.P."/>
            <person name="Blakey S.E."/>
            <person name="Bray-Allen S."/>
            <person name="Brook J."/>
            <person name="Brown A.J."/>
            <person name="Brown J.Y."/>
            <person name="Burford D.C."/>
            <person name="Burrill W."/>
            <person name="Burton J."/>
            <person name="Carder C."/>
            <person name="Carter N.P."/>
            <person name="Chapman J.C."/>
            <person name="Clark S.Y."/>
            <person name="Clark G."/>
            <person name="Clee C.M."/>
            <person name="Clegg S."/>
            <person name="Cobley V."/>
            <person name="Collier R.E."/>
            <person name="Collins J.E."/>
            <person name="Colman L.K."/>
            <person name="Corby N.R."/>
            <person name="Coville G.J."/>
            <person name="Culley K.M."/>
            <person name="Dhami P."/>
            <person name="Davies J."/>
            <person name="Dunn M."/>
            <person name="Earthrowl M.E."/>
            <person name="Ellington A.E."/>
            <person name="Evans K.A."/>
            <person name="Faulkner L."/>
            <person name="Francis M.D."/>
            <person name="Frankish A."/>
            <person name="Frankland J."/>
            <person name="French L."/>
            <person name="Garner P."/>
            <person name="Garnett J."/>
            <person name="Ghori M.J."/>
            <person name="Gilby L.M."/>
            <person name="Gillson C.J."/>
            <person name="Glithero R.J."/>
            <person name="Grafham D.V."/>
            <person name="Grant M."/>
            <person name="Gribble S."/>
            <person name="Griffiths C."/>
            <person name="Griffiths M.N.D."/>
            <person name="Hall R."/>
            <person name="Halls K.S."/>
            <person name="Hammond S."/>
            <person name="Harley J.L."/>
            <person name="Hart E.A."/>
            <person name="Heath P.D."/>
            <person name="Heathcott R."/>
            <person name="Holmes S.J."/>
            <person name="Howden P.J."/>
            <person name="Howe K.L."/>
            <person name="Howell G.R."/>
            <person name="Huckle E."/>
            <person name="Humphray S.J."/>
            <person name="Humphries M.D."/>
            <person name="Hunt A.R."/>
            <person name="Johnson C.M."/>
            <person name="Joy A.A."/>
            <person name="Kay M."/>
            <person name="Keenan S.J."/>
            <person name="Kimberley A.M."/>
            <person name="King A."/>
            <person name="Laird G.K."/>
            <person name="Langford C."/>
            <person name="Lawlor S."/>
            <person name="Leongamornlert D.A."/>
            <person name="Leversha M."/>
            <person name="Lloyd C.R."/>
            <person name="Lloyd D.M."/>
            <person name="Loveland J.E."/>
            <person name="Lovell J."/>
            <person name="Martin S."/>
            <person name="Mashreghi-Mohammadi M."/>
            <person name="Maslen G.L."/>
            <person name="Matthews L."/>
            <person name="McCann O.T."/>
            <person name="McLaren S.J."/>
            <person name="McLay K."/>
            <person name="McMurray A."/>
            <person name="Moore M.J.F."/>
            <person name="Mullikin J.C."/>
            <person name="Niblett D."/>
            <person name="Nickerson T."/>
            <person name="Novik K.L."/>
            <person name="Oliver K."/>
            <person name="Overton-Larty E.K."/>
            <person name="Parker A."/>
            <person name="Patel R."/>
            <person name="Pearce A.V."/>
            <person name="Peck A.I."/>
            <person name="Phillimore B.J.C.T."/>
            <person name="Phillips S."/>
            <person name="Plumb R.W."/>
            <person name="Porter K.M."/>
            <person name="Ramsey Y."/>
            <person name="Ranby S.A."/>
            <person name="Rice C.M."/>
            <person name="Ross M.T."/>
            <person name="Searle S.M."/>
            <person name="Sehra H.K."/>
            <person name="Sheridan E."/>
            <person name="Skuce C.D."/>
            <person name="Smith S."/>
            <person name="Smith M."/>
            <person name="Spraggon L."/>
            <person name="Squares S.L."/>
            <person name="Steward C.A."/>
            <person name="Sycamore N."/>
            <person name="Tamlyn-Hall G."/>
            <person name="Tester J."/>
            <person name="Theaker A.J."/>
            <person name="Thomas D.W."/>
            <person name="Thorpe A."/>
            <person name="Tracey A."/>
            <person name="Tromans A."/>
            <person name="Tubby B."/>
            <person name="Wall M."/>
            <person name="Wallis J.M."/>
            <person name="West A.P."/>
            <person name="White S.S."/>
            <person name="Whitehead S.L."/>
            <person name="Whittaker H."/>
            <person name="Wild A."/>
            <person name="Willey D.J."/>
            <person name="Wilmer T.E."/>
            <person name="Wood J.M."/>
            <person name="Wray P.W."/>
            <person name="Wyatt J.C."/>
            <person name="Young L."/>
            <person name="Younger R.M."/>
            <person name="Bentley D.R."/>
            <person name="Coulson A."/>
            <person name="Durbin R.M."/>
            <person name="Hubbard T."/>
            <person name="Sulston J.E."/>
            <person name="Dunham I."/>
            <person name="Rogers J."/>
            <person name="Beck S."/>
        </authorList>
    </citation>
    <scope>NUCLEOTIDE SEQUENCE [LARGE SCALE GENOMIC DNA]</scope>
    <scope>VARIANT GLY-566</scope>
</reference>
<reference key="5">
    <citation type="journal article" date="2004" name="Genome Res.">
        <title>The status, quality, and expansion of the NIH full-length cDNA project: the Mammalian Gene Collection (MGC).</title>
        <authorList>
            <consortium name="The MGC Project Team"/>
        </authorList>
    </citation>
    <scope>NUCLEOTIDE SEQUENCE [LARGE SCALE MRNA]</scope>
    <source>
        <tissue>Brain</tissue>
    </source>
</reference>
<reference key="6">
    <citation type="journal article" date="2006" name="Cell">
        <title>Global, in vivo, and site-specific phosphorylation dynamics in signaling networks.</title>
        <authorList>
            <person name="Olsen J.V."/>
            <person name="Blagoev B."/>
            <person name="Gnad F."/>
            <person name="Macek B."/>
            <person name="Kumar C."/>
            <person name="Mortensen P."/>
            <person name="Mann M."/>
        </authorList>
    </citation>
    <scope>PHOSPHORYLATION [LARGE SCALE ANALYSIS] AT SER-103 AND SER-160</scope>
    <scope>IDENTIFICATION BY MASS SPECTROMETRY [LARGE SCALE ANALYSIS]</scope>
    <source>
        <tissue>Cervix carcinoma</tissue>
    </source>
</reference>
<reference key="7">
    <citation type="journal article" date="2006" name="Nat. Biotechnol.">
        <title>A probability-based approach for high-throughput protein phosphorylation analysis and site localization.</title>
        <authorList>
            <person name="Beausoleil S.A."/>
            <person name="Villen J."/>
            <person name="Gerber S.A."/>
            <person name="Rush J."/>
            <person name="Gygi S.P."/>
        </authorList>
    </citation>
    <scope>PHOSPHORYLATION [LARGE SCALE ANALYSIS] AT SER-103</scope>
    <scope>IDENTIFICATION BY MASS SPECTROMETRY [LARGE SCALE ANALYSIS]</scope>
    <source>
        <tissue>Cervix carcinoma</tissue>
    </source>
</reference>
<reference key="8">
    <citation type="journal article" date="2008" name="Proc. Natl. Acad. Sci. U.S.A.">
        <title>A quantitative atlas of mitotic phosphorylation.</title>
        <authorList>
            <person name="Dephoure N."/>
            <person name="Zhou C."/>
            <person name="Villen J."/>
            <person name="Beausoleil S.A."/>
            <person name="Bakalarski C.E."/>
            <person name="Elledge S.J."/>
            <person name="Gygi S.P."/>
        </authorList>
    </citation>
    <scope>PHOSPHORYLATION [LARGE SCALE ANALYSIS] AT SER-103; SER-106 AND SER-107</scope>
    <scope>IDENTIFICATION BY MASS SPECTROMETRY [LARGE SCALE ANALYSIS]</scope>
    <source>
        <tissue>Cervix carcinoma</tissue>
    </source>
</reference>
<reference key="9">
    <citation type="journal article" date="2008" name="Proteomics">
        <title>Large-scale phosphoproteome analysis of human liver tissue by enrichment and fractionation of phosphopeptides with strong anion exchange chromatography.</title>
        <authorList>
            <person name="Han G."/>
            <person name="Ye M."/>
            <person name="Zhou H."/>
            <person name="Jiang X."/>
            <person name="Feng S."/>
            <person name="Jiang X."/>
            <person name="Tian R."/>
            <person name="Wan D."/>
            <person name="Zou H."/>
            <person name="Gu J."/>
        </authorList>
    </citation>
    <scope>PHOSPHORYLATION [LARGE SCALE ANALYSIS] AT SER-103</scope>
    <scope>IDENTIFICATION BY MASS SPECTROMETRY [LARGE SCALE ANALYSIS]</scope>
    <source>
        <tissue>Liver</tissue>
    </source>
</reference>
<reference key="10">
    <citation type="journal article" date="2009" name="Anal. Chem.">
        <title>Lys-N and trypsin cover complementary parts of the phosphoproteome in a refined SCX-based approach.</title>
        <authorList>
            <person name="Gauci S."/>
            <person name="Helbig A.O."/>
            <person name="Slijper M."/>
            <person name="Krijgsveld J."/>
            <person name="Heck A.J."/>
            <person name="Mohammed S."/>
        </authorList>
    </citation>
    <scope>IDENTIFICATION BY MASS SPECTROMETRY [LARGE SCALE ANALYSIS]</scope>
</reference>
<reference key="11">
    <citation type="journal article" date="2009" name="Sci. Signal.">
        <title>Quantitative phosphoproteomic analysis of T cell receptor signaling reveals system-wide modulation of protein-protein interactions.</title>
        <authorList>
            <person name="Mayya V."/>
            <person name="Lundgren D.H."/>
            <person name="Hwang S.-I."/>
            <person name="Rezaul K."/>
            <person name="Wu L."/>
            <person name="Eng J.K."/>
            <person name="Rodionov V."/>
            <person name="Han D.K."/>
        </authorList>
    </citation>
    <scope>PHOSPHORYLATION [LARGE SCALE ANALYSIS] AT SER-103</scope>
    <scope>IDENTIFICATION BY MASS SPECTROMETRY [LARGE SCALE ANALYSIS]</scope>
    <source>
        <tissue>Leukemic T-cell</tissue>
    </source>
</reference>
<reference key="12">
    <citation type="journal article" date="2010" name="Biochem. J.">
        <title>Contribution of DEAH-box protein DHX16 in human pre-mRNA splicing.</title>
        <authorList>
            <person name="Gencheva M."/>
            <person name="Kato M."/>
            <person name="Newo A.N."/>
            <person name="Lin R.J."/>
        </authorList>
    </citation>
    <scope>FUNCTION</scope>
    <scope>SUBCELLULAR LOCATION</scope>
    <scope>MUTAGENESIS OF LYS-428; ASP-520; HIS-523; SER-552 AND GLY-724</scope>
</reference>
<reference key="13">
    <citation type="journal article" date="2010" name="J. Biol. Chem.">
        <title>Nuclear retention of unspliced pre-mRNAs by mutant DHX16/hPRP2, a spliceosomal DEAH-box protein.</title>
        <authorList>
            <person name="Gencheva M."/>
            <person name="Lin T.Y."/>
            <person name="Wu X."/>
            <person name="Yang L."/>
            <person name="Richard C."/>
            <person name="Jones M."/>
            <person name="Lin S.B."/>
            <person name="Lin R.J."/>
        </authorList>
    </citation>
    <scope>FUNCTION</scope>
    <scope>SUBCELLULAR LOCATION</scope>
    <scope>MUTAGENESIS OF GLY-724</scope>
</reference>
<reference key="14">
    <citation type="journal article" date="2010" name="Sci. Signal.">
        <title>Quantitative phosphoproteomics reveals widespread full phosphorylation site occupancy during mitosis.</title>
        <authorList>
            <person name="Olsen J.V."/>
            <person name="Vermeulen M."/>
            <person name="Santamaria A."/>
            <person name="Kumar C."/>
            <person name="Miller M.L."/>
            <person name="Jensen L.J."/>
            <person name="Gnad F."/>
            <person name="Cox J."/>
            <person name="Jensen T.S."/>
            <person name="Nigg E.A."/>
            <person name="Brunak S."/>
            <person name="Mann M."/>
        </authorList>
    </citation>
    <scope>PHOSPHORYLATION [LARGE SCALE ANALYSIS] AT SER-103; SER-106; SER-107 AND SER-160</scope>
    <scope>IDENTIFICATION BY MASS SPECTROMETRY [LARGE SCALE ANALYSIS]</scope>
    <source>
        <tissue>Cervix carcinoma</tissue>
    </source>
</reference>
<reference key="15">
    <citation type="journal article" date="2011" name="BMC Syst. Biol.">
        <title>Initial characterization of the human central proteome.</title>
        <authorList>
            <person name="Burkard T.R."/>
            <person name="Planyavsky M."/>
            <person name="Kaupe I."/>
            <person name="Breitwieser F.P."/>
            <person name="Buerckstuemmer T."/>
            <person name="Bennett K.L."/>
            <person name="Superti-Furga G."/>
            <person name="Colinge J."/>
        </authorList>
    </citation>
    <scope>IDENTIFICATION BY MASS SPECTROMETRY [LARGE SCALE ANALYSIS]</scope>
</reference>
<reference key="16">
    <citation type="journal article" date="2011" name="Sci. Signal.">
        <title>System-wide temporal characterization of the proteome and phosphoproteome of human embryonic stem cell differentiation.</title>
        <authorList>
            <person name="Rigbolt K.T."/>
            <person name="Prokhorova T.A."/>
            <person name="Akimov V."/>
            <person name="Henningsen J."/>
            <person name="Johansen P.T."/>
            <person name="Kratchmarova I."/>
            <person name="Kassem M."/>
            <person name="Mann M."/>
            <person name="Olsen J.V."/>
            <person name="Blagoev B."/>
        </authorList>
    </citation>
    <scope>PHOSPHORYLATION [LARGE SCALE ANALYSIS] AT SER-103 AND SER-107</scope>
    <scope>IDENTIFICATION BY MASS SPECTROMETRY [LARGE SCALE ANALYSIS]</scope>
</reference>
<reference key="17">
    <citation type="journal article" date="2013" name="J. Proteome Res.">
        <title>Toward a comprehensive characterization of a human cancer cell phosphoproteome.</title>
        <authorList>
            <person name="Zhou H."/>
            <person name="Di Palma S."/>
            <person name="Preisinger C."/>
            <person name="Peng M."/>
            <person name="Polat A.N."/>
            <person name="Heck A.J."/>
            <person name="Mohammed S."/>
        </authorList>
    </citation>
    <scope>PHOSPHORYLATION [LARGE SCALE ANALYSIS] AT SER-103; SER-106; SER-160 AND THR-712</scope>
    <scope>IDENTIFICATION BY MASS SPECTROMETRY [LARGE SCALE ANALYSIS]</scope>
    <source>
        <tissue>Cervix carcinoma</tissue>
        <tissue>Erythroleukemia</tissue>
    </source>
</reference>
<reference key="18">
    <citation type="journal article" date="2014" name="Biosci. Rep.">
        <title>GPKOW is essential for pre-mRNA splicing in vitro and suppresses splicing defect caused by dominant-negative DHX16 mutation in vivo.</title>
        <authorList>
            <person name="Zang S."/>
            <person name="Lin T.Y."/>
            <person name="Chen X."/>
            <person name="Gencheva M."/>
            <person name="Newo A.N."/>
            <person name="Yang L."/>
            <person name="Rossi D."/>
            <person name="Hu J."/>
            <person name="Lin S.B."/>
            <person name="Huang A."/>
            <person name="Lin R.J."/>
        </authorList>
    </citation>
    <scope>FUNCTION</scope>
    <scope>SUBCELLULAR LOCATION</scope>
    <scope>INTERACTION WITH GPKOW</scope>
    <scope>MUTAGENESIS OF SER-552 AND GLY-724</scope>
</reference>
<reference key="19">
    <citation type="journal article" date="2022" name="Cell Rep.">
        <title>The RNA helicase DHX16 recognizes specific viral RNA to trigger RIG-I-dependent innate antiviral immunity.</title>
        <authorList>
            <person name="Hage A."/>
            <person name="Bharaj P."/>
            <person name="van Tol S."/>
            <person name="Giraldo M.I."/>
            <person name="Gonzalez-Orozco M."/>
            <person name="Valerdi K.M."/>
            <person name="Warren A.N."/>
            <person name="Aguilera-Aguirre L."/>
            <person name="Xie X."/>
            <person name="Widen S.G."/>
            <person name="Moulton H.M."/>
            <person name="Lee B."/>
            <person name="Johnson J.R."/>
            <person name="Krogan N.J."/>
            <person name="Garcia-Sastre A."/>
            <person name="Shi P.Y."/>
            <person name="Freiberg A.N."/>
            <person name="Rajsbaum R."/>
        </authorList>
    </citation>
    <scope>FUNCTION</scope>
    <scope>SUBCELLULAR LOCATION</scope>
    <scope>INTERACTION WITH RIGI ANF TRIM6</scope>
    <scope>MUTAGENESIS OF SER-552 AND GLY-724</scope>
</reference>
<reference key="20">
    <citation type="journal article" date="2019" name="Am. J. Hum. Genet.">
        <title>Paralog studies augment gene discovery: DDX and DHX genes.</title>
        <authorList>
            <consortium name="University of Washington Center for Mendelian Genomics, Baylor-Hopkins Center for Mendelian Genomics, Telethon Undiagnosed Diseases Program"/>
            <person name="Paine I."/>
            <person name="Posey J.E."/>
            <person name="Grochowski C.M."/>
            <person name="Jhangiani S.N."/>
            <person name="Rosenheck S."/>
            <person name="Kleyner R."/>
            <person name="Marmorale T."/>
            <person name="Yoon M."/>
            <person name="Wang K."/>
            <person name="Robison R."/>
            <person name="Cappuccio G."/>
            <person name="Pinelli M."/>
            <person name="Magli A."/>
            <person name="Coban Akdemir Z."/>
            <person name="Hui J."/>
            <person name="Yeung W.L."/>
            <person name="Wong B.K.Y."/>
            <person name="Ortega L."/>
            <person name="Bekheirnia M.R."/>
            <person name="Bierhals T."/>
            <person name="Hempel M."/>
            <person name="Johannsen J."/>
            <person name="Santer R."/>
            <person name="Aktas D."/>
            <person name="Alikasifoglu M."/>
            <person name="Bozdogan S."/>
            <person name="Aydin H."/>
            <person name="Karaca E."/>
            <person name="Bayram Y."/>
            <person name="Ityel H."/>
            <person name="Dorschner M."/>
            <person name="White J.J."/>
            <person name="Wilichowski E."/>
            <person name="Wortmann S.B."/>
            <person name="Casella E.B."/>
            <person name="Kitajima J.P."/>
            <person name="Kok F."/>
            <person name="Monteiro F."/>
            <person name="Muzny D.M."/>
            <person name="Bamshad M."/>
            <person name="Gibbs R.A."/>
            <person name="Sutton V.R."/>
            <person name="Van Esch H."/>
            <person name="Brunetti-Pierri N."/>
            <person name="Hildebrandt F."/>
            <person name="Brautbar A."/>
            <person name="Van den Veyver I.B."/>
            <person name="Glass I."/>
            <person name="Lessel D."/>
            <person name="Lyon G.J."/>
            <person name="Lupski J.R."/>
        </authorList>
    </citation>
    <scope>INVOLVEMENT IN NMOAS</scope>
    <scope>VARIANTS NMOAS GLU-427; ILE-582; MET-674 AND HIS-697</scope>
    <scope>TISSUE SPECIFICITY</scope>
</reference>
<reference evidence="16 17 18" key="21">
    <citation type="journal article" date="2018" name="Cell Res.">
        <title>Structure of the human activated spliceosome in three conformational states.</title>
        <authorList>
            <person name="Zhang X."/>
            <person name="Yan C."/>
            <person name="Zhan X."/>
            <person name="Li L."/>
            <person name="Lei J."/>
            <person name="Shi Y."/>
        </authorList>
    </citation>
    <scope>STRUCTURE BY ELECTRON MICROSCOPY (4.90 ANGSTROMS)</scope>
    <scope>FUNCTION</scope>
    <scope>SUBCELLULAR LOCATION</scope>
    <scope>SUBUNIT</scope>
</reference>
<reference evidence="19" key="22">
    <citation type="journal article" date="2021" name="Science">
        <title>Structure of the activated human minor spliceosome.</title>
        <authorList>
            <person name="Bai R."/>
            <person name="Wan R."/>
            <person name="Wang L."/>
            <person name="Xu K."/>
            <person name="Zhang Q."/>
            <person name="Lei J."/>
            <person name="Shi Y."/>
        </authorList>
    </citation>
    <scope>STRUCTURE BY ELECTRON MICROSCOPY (2.89 ANGSTROMS)</scope>
    <scope>SUBUNIT</scope>
</reference>
<dbReference type="EC" id="3.6.4.13"/>
<dbReference type="EMBL" id="AB001601">
    <property type="protein sequence ID" value="BAA25908.1"/>
    <property type="molecule type" value="mRNA"/>
</dbReference>
<dbReference type="EMBL" id="BA000025">
    <property type="protein sequence ID" value="BAB63323.1"/>
    <property type="molecule type" value="Genomic_DNA"/>
</dbReference>
<dbReference type="EMBL" id="AB011149">
    <property type="protein sequence ID" value="BAA25503.2"/>
    <property type="status" value="ALT_INIT"/>
    <property type="molecule type" value="mRNA"/>
</dbReference>
<dbReference type="EMBL" id="AL845353">
    <property type="status" value="NOT_ANNOTATED_CDS"/>
    <property type="molecule type" value="Genomic_DNA"/>
</dbReference>
<dbReference type="EMBL" id="BC008825">
    <property type="protein sequence ID" value="AAH08825.1"/>
    <property type="molecule type" value="mRNA"/>
</dbReference>
<dbReference type="EMBL" id="BC009392">
    <property type="protein sequence ID" value="AAH09392.1"/>
    <property type="molecule type" value="mRNA"/>
</dbReference>
<dbReference type="CCDS" id="CCDS4685.1"/>
<dbReference type="RefSeq" id="NP_001157711.1">
    <property type="nucleotide sequence ID" value="NM_001164239.1"/>
</dbReference>
<dbReference type="RefSeq" id="NP_003578.2">
    <property type="nucleotide sequence ID" value="NM_003587.5"/>
</dbReference>
<dbReference type="PDB" id="5Z56">
    <property type="method" value="EM"/>
    <property type="resolution" value="5.10 A"/>
    <property type="chains" value="x=1-1041"/>
</dbReference>
<dbReference type="PDB" id="5Z57">
    <property type="method" value="EM"/>
    <property type="resolution" value="6.50 A"/>
    <property type="chains" value="x=1-1041"/>
</dbReference>
<dbReference type="PDB" id="5Z58">
    <property type="method" value="EM"/>
    <property type="resolution" value="4.90 A"/>
    <property type="chains" value="x=1-1041"/>
</dbReference>
<dbReference type="PDB" id="6FF7">
    <property type="method" value="EM"/>
    <property type="resolution" value="4.50 A"/>
    <property type="chains" value="q=1-1041"/>
</dbReference>
<dbReference type="PDB" id="7DVQ">
    <property type="method" value="EM"/>
    <property type="resolution" value="2.89 A"/>
    <property type="chains" value="x=1-1041"/>
</dbReference>
<dbReference type="PDB" id="7QTT">
    <property type="method" value="EM"/>
    <property type="resolution" value="3.10 A"/>
    <property type="chains" value="N=1-1041"/>
</dbReference>
<dbReference type="PDB" id="8CH6">
    <property type="method" value="EM"/>
    <property type="resolution" value="5.90 A"/>
    <property type="chains" value="N=1-1041"/>
</dbReference>
<dbReference type="PDB" id="8I0R">
    <property type="method" value="EM"/>
    <property type="resolution" value="3.00 A"/>
    <property type="chains" value="S=1-1041"/>
</dbReference>
<dbReference type="PDB" id="8I0S">
    <property type="method" value="EM"/>
    <property type="resolution" value="4.20 A"/>
    <property type="chains" value="X=1-1041"/>
</dbReference>
<dbReference type="PDB" id="8I0T">
    <property type="method" value="EM"/>
    <property type="resolution" value="3.00 A"/>
    <property type="chains" value="X=1-1041"/>
</dbReference>
<dbReference type="PDB" id="8I0U">
    <property type="method" value="EM"/>
    <property type="resolution" value="3.30 A"/>
    <property type="chains" value="X=1-1041"/>
</dbReference>
<dbReference type="PDB" id="8I0V">
    <property type="method" value="EM"/>
    <property type="resolution" value="3.00 A"/>
    <property type="chains" value="X=1-1041"/>
</dbReference>
<dbReference type="PDBsum" id="5Z56"/>
<dbReference type="PDBsum" id="5Z57"/>
<dbReference type="PDBsum" id="5Z58"/>
<dbReference type="PDBsum" id="6FF7"/>
<dbReference type="PDBsum" id="7DVQ"/>
<dbReference type="PDBsum" id="7QTT"/>
<dbReference type="PDBsum" id="8CH6"/>
<dbReference type="PDBsum" id="8I0R"/>
<dbReference type="PDBsum" id="8I0S"/>
<dbReference type="PDBsum" id="8I0T"/>
<dbReference type="PDBsum" id="8I0U"/>
<dbReference type="PDBsum" id="8I0V"/>
<dbReference type="EMDB" id="EMD-14146"/>
<dbReference type="EMDB" id="EMD-16658"/>
<dbReference type="EMDB" id="EMD-30875"/>
<dbReference type="EMDB" id="EMD-35107"/>
<dbReference type="EMDB" id="EMD-35108"/>
<dbReference type="EMDB" id="EMD-35109"/>
<dbReference type="EMDB" id="EMD-35110"/>
<dbReference type="EMDB" id="EMD-35111"/>
<dbReference type="EMDB" id="EMD-6889"/>
<dbReference type="EMDB" id="EMD-6890"/>
<dbReference type="EMDB" id="EMD-6891"/>
<dbReference type="SMR" id="O60231"/>
<dbReference type="BioGRID" id="114027">
    <property type="interactions" value="208"/>
</dbReference>
<dbReference type="CORUM" id="O60231"/>
<dbReference type="FunCoup" id="O60231">
    <property type="interactions" value="2333"/>
</dbReference>
<dbReference type="IntAct" id="O60231">
    <property type="interactions" value="91"/>
</dbReference>
<dbReference type="MINT" id="O60231"/>
<dbReference type="STRING" id="9606.ENSP00000365625"/>
<dbReference type="GlyGen" id="O60231">
    <property type="glycosylation" value="2 sites, 1 O-linked glycan (1 site)"/>
</dbReference>
<dbReference type="iPTMnet" id="O60231"/>
<dbReference type="MetOSite" id="O60231"/>
<dbReference type="PhosphoSitePlus" id="O60231"/>
<dbReference type="SwissPalm" id="O60231"/>
<dbReference type="BioMuta" id="DHX16"/>
<dbReference type="jPOST" id="O60231"/>
<dbReference type="MassIVE" id="O60231"/>
<dbReference type="PaxDb" id="9606-ENSP00000365625"/>
<dbReference type="PeptideAtlas" id="O60231"/>
<dbReference type="ProteomicsDB" id="49258"/>
<dbReference type="Pumba" id="O60231"/>
<dbReference type="Antibodypedia" id="26473">
    <property type="antibodies" value="100 antibodies from 24 providers"/>
</dbReference>
<dbReference type="DNASU" id="8449"/>
<dbReference type="Ensembl" id="ENST00000376442.8">
    <property type="protein sequence ID" value="ENSP00000365625.3"/>
    <property type="gene ID" value="ENSG00000204560.10"/>
</dbReference>
<dbReference type="Ensembl" id="ENST00000383577.8">
    <property type="protein sequence ID" value="ENSP00000373071.4"/>
    <property type="gene ID" value="ENSG00000206486.8"/>
</dbReference>
<dbReference type="Ensembl" id="ENST00000417308.6">
    <property type="protein sequence ID" value="ENSP00000390938.2"/>
    <property type="gene ID" value="ENSG00000233561.6"/>
</dbReference>
<dbReference type="Ensembl" id="ENST00000421095.6">
    <property type="protein sequence ID" value="ENSP00000396193.2"/>
    <property type="gene ID" value="ENSG00000226171.6"/>
</dbReference>
<dbReference type="Ensembl" id="ENST00000424672.6">
    <property type="protein sequence ID" value="ENSP00000389862.2"/>
    <property type="gene ID" value="ENSG00000233418.8"/>
</dbReference>
<dbReference type="Ensembl" id="ENST00000451456.6">
    <property type="protein sequence ID" value="ENSP00000408956.2"/>
    <property type="gene ID" value="ENSG00000233049.6"/>
</dbReference>
<dbReference type="Ensembl" id="ENST00000458094.6">
    <property type="protein sequence ID" value="ENSP00000393958.2"/>
    <property type="gene ID" value="ENSG00000231377.6"/>
</dbReference>
<dbReference type="GeneID" id="8449"/>
<dbReference type="KEGG" id="hsa:8449"/>
<dbReference type="MANE-Select" id="ENST00000376442.8">
    <property type="protein sequence ID" value="ENSP00000365625.3"/>
    <property type="RefSeq nucleotide sequence ID" value="NM_003587.5"/>
    <property type="RefSeq protein sequence ID" value="NP_003578.2"/>
</dbReference>
<dbReference type="UCSC" id="uc011ijv.3">
    <property type="organism name" value="human"/>
</dbReference>
<dbReference type="AGR" id="HGNC:2739"/>
<dbReference type="CTD" id="8449"/>
<dbReference type="DisGeNET" id="8449"/>
<dbReference type="GeneCards" id="DHX16"/>
<dbReference type="HGNC" id="HGNC:2739">
    <property type="gene designation" value="DHX16"/>
</dbReference>
<dbReference type="HPA" id="ENSG00000204560">
    <property type="expression patterns" value="Low tissue specificity"/>
</dbReference>
<dbReference type="MalaCards" id="DHX16"/>
<dbReference type="MIM" id="603405">
    <property type="type" value="gene"/>
</dbReference>
<dbReference type="MIM" id="618733">
    <property type="type" value="phenotype"/>
</dbReference>
<dbReference type="neXtProt" id="NX_O60231"/>
<dbReference type="OpenTargets" id="ENSG00000204560"/>
<dbReference type="PharmGKB" id="PA27205"/>
<dbReference type="VEuPathDB" id="HostDB:ENSG00000204560"/>
<dbReference type="eggNOG" id="KOG0923">
    <property type="taxonomic scope" value="Eukaryota"/>
</dbReference>
<dbReference type="GeneTree" id="ENSGT00940000158480"/>
<dbReference type="HOGENOM" id="CLU_001832_7_1_1"/>
<dbReference type="InParanoid" id="O60231"/>
<dbReference type="OMA" id="PLDPMMS"/>
<dbReference type="OrthoDB" id="10253254at2759"/>
<dbReference type="PAN-GO" id="O60231">
    <property type="GO annotations" value="2 GO annotations based on evolutionary models"/>
</dbReference>
<dbReference type="PhylomeDB" id="O60231"/>
<dbReference type="TreeFam" id="TF313473"/>
<dbReference type="BRENDA" id="3.6.4.13">
    <property type="organism ID" value="2681"/>
</dbReference>
<dbReference type="PathwayCommons" id="O60231"/>
<dbReference type="Reactome" id="R-HSA-72163">
    <property type="pathway name" value="mRNA Splicing - Major Pathway"/>
</dbReference>
<dbReference type="SignaLink" id="O60231"/>
<dbReference type="SIGNOR" id="O60231"/>
<dbReference type="BioGRID-ORCS" id="8449">
    <property type="hits" value="754 hits in 1170 CRISPR screens"/>
</dbReference>
<dbReference type="GeneWiki" id="DHX16"/>
<dbReference type="GenomeRNAi" id="8449"/>
<dbReference type="Pharos" id="O60231">
    <property type="development level" value="Tbio"/>
</dbReference>
<dbReference type="PRO" id="PR:O60231"/>
<dbReference type="Proteomes" id="UP000005640">
    <property type="component" value="Chromosome 6"/>
</dbReference>
<dbReference type="RNAct" id="O60231">
    <property type="molecule type" value="protein"/>
</dbReference>
<dbReference type="Bgee" id="ENSG00000204560">
    <property type="expression patterns" value="Expressed in sural nerve and 97 other cell types or tissues"/>
</dbReference>
<dbReference type="ExpressionAtlas" id="O60231">
    <property type="expression patterns" value="baseline and differential"/>
</dbReference>
<dbReference type="GO" id="GO:0005737">
    <property type="term" value="C:cytoplasm"/>
    <property type="evidence" value="ECO:0000314"/>
    <property type="project" value="UniProt"/>
</dbReference>
<dbReference type="GO" id="GO:0005654">
    <property type="term" value="C:nucleoplasm"/>
    <property type="evidence" value="ECO:0000314"/>
    <property type="project" value="UniProtKB"/>
</dbReference>
<dbReference type="GO" id="GO:0005634">
    <property type="term" value="C:nucleus"/>
    <property type="evidence" value="ECO:0000314"/>
    <property type="project" value="UniProtKB"/>
</dbReference>
<dbReference type="GO" id="GO:0005681">
    <property type="term" value="C:spliceosomal complex"/>
    <property type="evidence" value="ECO:0000314"/>
    <property type="project" value="UniProtKB"/>
</dbReference>
<dbReference type="GO" id="GO:0071005">
    <property type="term" value="C:U2-type precatalytic spliceosome"/>
    <property type="evidence" value="ECO:0000314"/>
    <property type="project" value="UniProtKB"/>
</dbReference>
<dbReference type="GO" id="GO:0005524">
    <property type="term" value="F:ATP binding"/>
    <property type="evidence" value="ECO:0007669"/>
    <property type="project" value="UniProtKB-KW"/>
</dbReference>
<dbReference type="GO" id="GO:0016887">
    <property type="term" value="F:ATP hydrolysis activity"/>
    <property type="evidence" value="ECO:0007669"/>
    <property type="project" value="RHEA"/>
</dbReference>
<dbReference type="GO" id="GO:0004386">
    <property type="term" value="F:helicase activity"/>
    <property type="evidence" value="ECO:0000318"/>
    <property type="project" value="GO_Central"/>
</dbReference>
<dbReference type="GO" id="GO:0060090">
    <property type="term" value="F:molecular adaptor activity"/>
    <property type="evidence" value="ECO:0000314"/>
    <property type="project" value="UniProt"/>
</dbReference>
<dbReference type="GO" id="GO:0038187">
    <property type="term" value="F:pattern recognition receptor activity"/>
    <property type="evidence" value="ECO:0000314"/>
    <property type="project" value="UniProt"/>
</dbReference>
<dbReference type="GO" id="GO:0003723">
    <property type="term" value="F:RNA binding"/>
    <property type="evidence" value="ECO:0007005"/>
    <property type="project" value="UniProtKB"/>
</dbReference>
<dbReference type="GO" id="GO:0003724">
    <property type="term" value="F:RNA helicase activity"/>
    <property type="evidence" value="ECO:0000304"/>
    <property type="project" value="Reactome"/>
</dbReference>
<dbReference type="GO" id="GO:0043130">
    <property type="term" value="F:ubiquitin binding"/>
    <property type="evidence" value="ECO:0000314"/>
    <property type="project" value="UniProt"/>
</dbReference>
<dbReference type="GO" id="GO:0140374">
    <property type="term" value="P:antiviral innate immune response"/>
    <property type="evidence" value="ECO:0000314"/>
    <property type="project" value="UniProt"/>
</dbReference>
<dbReference type="GO" id="GO:0000398">
    <property type="term" value="P:mRNA splicing, via spliceosome"/>
    <property type="evidence" value="ECO:0000314"/>
    <property type="project" value="UniProtKB"/>
</dbReference>
<dbReference type="GO" id="GO:0008380">
    <property type="term" value="P:RNA splicing"/>
    <property type="evidence" value="ECO:0000304"/>
    <property type="project" value="ProtInc"/>
</dbReference>
<dbReference type="CDD" id="cd17974">
    <property type="entry name" value="DEXHc_DHX16"/>
    <property type="match status" value="1"/>
</dbReference>
<dbReference type="CDD" id="cd18791">
    <property type="entry name" value="SF2_C_RHA"/>
    <property type="match status" value="1"/>
</dbReference>
<dbReference type="FunFam" id="1.20.120.1080:FF:000001">
    <property type="entry name" value="Pre-mRNA-splicing factor ATP-dependent RNA helicase"/>
    <property type="match status" value="1"/>
</dbReference>
<dbReference type="FunFam" id="3.40.50.300:FF:000007">
    <property type="entry name" value="Pre-mRNA-splicing factor ATP-dependent RNA helicase"/>
    <property type="match status" value="1"/>
</dbReference>
<dbReference type="FunFam" id="3.40.50.300:FF:000818">
    <property type="entry name" value="pre-mRNA-splicing factor ATP-dependent RNA helicase DHX16"/>
    <property type="match status" value="1"/>
</dbReference>
<dbReference type="Gene3D" id="1.20.120.1080">
    <property type="match status" value="1"/>
</dbReference>
<dbReference type="Gene3D" id="3.40.50.300">
    <property type="entry name" value="P-loop containing nucleotide triphosphate hydrolases"/>
    <property type="match status" value="2"/>
</dbReference>
<dbReference type="InterPro" id="IPR011709">
    <property type="entry name" value="DEAD-box_helicase_OB_fold"/>
</dbReference>
<dbReference type="InterPro" id="IPR011545">
    <property type="entry name" value="DEAD/DEAH_box_helicase_dom"/>
</dbReference>
<dbReference type="InterPro" id="IPR002464">
    <property type="entry name" value="DNA/RNA_helicase_DEAH_CS"/>
</dbReference>
<dbReference type="InterPro" id="IPR048333">
    <property type="entry name" value="HA2_WH"/>
</dbReference>
<dbReference type="InterPro" id="IPR007502">
    <property type="entry name" value="Helicase-assoc_dom"/>
</dbReference>
<dbReference type="InterPro" id="IPR014001">
    <property type="entry name" value="Helicase_ATP-bd"/>
</dbReference>
<dbReference type="InterPro" id="IPR001650">
    <property type="entry name" value="Helicase_C-like"/>
</dbReference>
<dbReference type="InterPro" id="IPR027417">
    <property type="entry name" value="P-loop_NTPase"/>
</dbReference>
<dbReference type="PANTHER" id="PTHR18934">
    <property type="entry name" value="ATP-DEPENDENT RNA HELICASE"/>
    <property type="match status" value="1"/>
</dbReference>
<dbReference type="PANTHER" id="PTHR18934:SF83">
    <property type="entry name" value="PRE-MRNA-SPLICING FACTOR ATP-DEPENDENT RNA HELICASE DHX16"/>
    <property type="match status" value="1"/>
</dbReference>
<dbReference type="Pfam" id="PF00270">
    <property type="entry name" value="DEAD"/>
    <property type="match status" value="1"/>
</dbReference>
<dbReference type="Pfam" id="PF21010">
    <property type="entry name" value="HA2_C"/>
    <property type="match status" value="1"/>
</dbReference>
<dbReference type="Pfam" id="PF04408">
    <property type="entry name" value="HA2_N"/>
    <property type="match status" value="1"/>
</dbReference>
<dbReference type="Pfam" id="PF00271">
    <property type="entry name" value="Helicase_C"/>
    <property type="match status" value="1"/>
</dbReference>
<dbReference type="Pfam" id="PF07717">
    <property type="entry name" value="OB_NTP_bind"/>
    <property type="match status" value="1"/>
</dbReference>
<dbReference type="SMART" id="SM00487">
    <property type="entry name" value="DEXDc"/>
    <property type="match status" value="1"/>
</dbReference>
<dbReference type="SMART" id="SM00847">
    <property type="entry name" value="HA2"/>
    <property type="match status" value="1"/>
</dbReference>
<dbReference type="SMART" id="SM00490">
    <property type="entry name" value="HELICc"/>
    <property type="match status" value="1"/>
</dbReference>
<dbReference type="SUPFAM" id="SSF52540">
    <property type="entry name" value="P-loop containing nucleoside triphosphate hydrolases"/>
    <property type="match status" value="1"/>
</dbReference>
<dbReference type="PROSITE" id="PS00690">
    <property type="entry name" value="DEAH_ATP_HELICASE"/>
    <property type="match status" value="1"/>
</dbReference>
<dbReference type="PROSITE" id="PS51192">
    <property type="entry name" value="HELICASE_ATP_BIND_1"/>
    <property type="match status" value="1"/>
</dbReference>
<dbReference type="PROSITE" id="PS51194">
    <property type="entry name" value="HELICASE_CTER"/>
    <property type="match status" value="1"/>
</dbReference>
<feature type="chain" id="PRO_0000055151" description="Pre-mRNA-splicing factor ATP-dependent RNA helicase DHX16">
    <location>
        <begin position="1"/>
        <end position="1041"/>
    </location>
</feature>
<feature type="domain" description="Helicase ATP-binding" evidence="1">
    <location>
        <begin position="409"/>
        <end position="573"/>
    </location>
</feature>
<feature type="domain" description="Helicase C-terminal" evidence="2">
    <location>
        <begin position="598"/>
        <end position="771"/>
    </location>
</feature>
<feature type="region of interest" description="Disordered" evidence="3">
    <location>
        <begin position="101"/>
        <end position="207"/>
    </location>
</feature>
<feature type="region of interest" description="Disordered" evidence="3">
    <location>
        <begin position="371"/>
        <end position="391"/>
    </location>
</feature>
<feature type="short sequence motif" description="DEAH box">
    <location>
        <begin position="520"/>
        <end position="523"/>
    </location>
</feature>
<feature type="compositionally biased region" description="Basic residues" evidence="3">
    <location>
        <begin position="119"/>
        <end position="130"/>
    </location>
</feature>
<feature type="compositionally biased region" description="Basic and acidic residues" evidence="3">
    <location>
        <begin position="166"/>
        <end position="207"/>
    </location>
</feature>
<feature type="compositionally biased region" description="Polar residues" evidence="3">
    <location>
        <begin position="381"/>
        <end position="391"/>
    </location>
</feature>
<feature type="binding site" evidence="1">
    <location>
        <begin position="422"/>
        <end position="429"/>
    </location>
    <ligand>
        <name>ATP</name>
        <dbReference type="ChEBI" id="CHEBI:30616"/>
    </ligand>
</feature>
<feature type="modified residue" description="Phosphoserine" evidence="20 21 22 23 24 25 26 27">
    <location>
        <position position="103"/>
    </location>
</feature>
<feature type="modified residue" description="Phosphoserine" evidence="23 25 27">
    <location>
        <position position="106"/>
    </location>
</feature>
<feature type="modified residue" description="Phosphoserine" evidence="23 25 26">
    <location>
        <position position="107"/>
    </location>
</feature>
<feature type="modified residue" description="Phosphoserine" evidence="21 25 27">
    <location>
        <position position="160"/>
    </location>
</feature>
<feature type="modified residue" description="Phosphothreonine" evidence="27">
    <location>
        <position position="712"/>
    </location>
</feature>
<feature type="sequence variant" id="VAR_057236" description="In dbSNP:rs17189239.">
    <original>K</original>
    <variation>E</variation>
    <location>
        <position position="352"/>
    </location>
</feature>
<feature type="sequence variant" id="VAR_083621" description="In NMOAS." evidence="9">
    <original>G</original>
    <variation>E</variation>
    <location>
        <position position="427"/>
    </location>
</feature>
<feature type="sequence variant" id="VAR_057237" description="In dbSNP:rs17189232.">
    <original>L</original>
    <variation>F</variation>
    <location>
        <position position="502"/>
    </location>
</feature>
<feature type="sequence variant" id="VAR_057238" description="In dbSNP:rs9262138." evidence="4">
    <original>D</original>
    <variation>G</variation>
    <location>
        <position position="566"/>
    </location>
</feature>
<feature type="sequence variant" id="VAR_083622" description="In NMOAS; uncertain significance." evidence="9">
    <original>F</original>
    <variation>I</variation>
    <location>
        <position position="582"/>
    </location>
</feature>
<feature type="sequence variant" id="VAR_083623" description="In NMOAS; uncertain significance." evidence="9">
    <original>T</original>
    <variation>M</variation>
    <location>
        <position position="674"/>
    </location>
</feature>
<feature type="sequence variant" id="VAR_083624" description="In NMOAS; uncertain significance." evidence="9">
    <original>Q</original>
    <variation>H</variation>
    <location>
        <position position="697"/>
    </location>
</feature>
<feature type="mutagenesis site" description="Impairs pre-mRNA splicing activity." evidence="5">
    <original>K</original>
    <variation>A</variation>
    <location>
        <position position="428"/>
    </location>
</feature>
<feature type="mutagenesis site" description="Impairs pre-mRNA splicing activity." evidence="5">
    <original>D</original>
    <variation>A</variation>
    <location>
        <position position="520"/>
    </location>
</feature>
<feature type="mutagenesis site" description="No loss of pre-mRNA splicing activity." evidence="5">
    <original>H</original>
    <variation>A</variation>
    <location>
        <position position="523"/>
    </location>
</feature>
<feature type="mutagenesis site" description="Dominant-negative mutant. Impairs pre-mRNA splicing activity. Fails to interact with any of viral RNA forms." evidence="5 7 11">
    <original>S</original>
    <variation>L</variation>
    <location>
        <position position="552"/>
    </location>
</feature>
<feature type="mutagenesis site" description="Dominant-negative mutant. Impairs pre-mRNA splicing activity. Fails to interact with any of viral RNA forms." evidence="5 6 7 11">
    <original>G</original>
    <variation>N</variation>
    <location>
        <position position="724"/>
    </location>
</feature>
<feature type="sequence conflict" description="In Ref. 1; BAA25908." evidence="14" ref="1">
    <original>V</original>
    <variation>I</variation>
    <location>
        <position position="223"/>
    </location>
</feature>
<feature type="sequence conflict" description="In Ref. 1; BAA25908." evidence="14" ref="1">
    <original>R</original>
    <variation>P</variation>
    <location>
        <position position="631"/>
    </location>
</feature>
<feature type="sequence conflict" description="In Ref. 1; BAA25908." evidence="14" ref="1">
    <original>L</original>
    <variation>P</variation>
    <location>
        <position position="681"/>
    </location>
</feature>
<feature type="sequence conflict" description="In Ref. 1; BAA25908." evidence="14" ref="1">
    <original>A</original>
    <variation>T</variation>
    <location>
        <position position="792"/>
    </location>
</feature>
<feature type="sequence conflict" description="In Ref. 1; BAA25908." evidence="14" ref="1">
    <original>Y</original>
    <variation>C</variation>
    <location>
        <position position="899"/>
    </location>
</feature>
<feature type="sequence conflict" description="In Ref. 5; AAH08825/AAH09392." evidence="14" ref="5">
    <original>K</original>
    <variation>KK</variation>
    <location>
        <position position="1032"/>
    </location>
</feature>
<feature type="helix" evidence="29">
    <location>
        <begin position="162"/>
        <end position="192"/>
    </location>
</feature>
<feature type="helix" evidence="29">
    <location>
        <begin position="223"/>
        <end position="255"/>
    </location>
</feature>
<feature type="helix" evidence="29">
    <location>
        <begin position="265"/>
        <end position="295"/>
    </location>
</feature>
<feature type="strand" evidence="29">
    <location>
        <begin position="305"/>
        <end position="307"/>
    </location>
</feature>
<feature type="helix" evidence="29">
    <location>
        <begin position="325"/>
        <end position="337"/>
    </location>
</feature>
<feature type="helix" evidence="28">
    <location>
        <begin position="387"/>
        <end position="395"/>
    </location>
</feature>
<feature type="helix" evidence="28">
    <location>
        <begin position="396"/>
        <end position="398"/>
    </location>
</feature>
<feature type="helix" evidence="28">
    <location>
        <begin position="401"/>
        <end position="414"/>
    </location>
</feature>
<feature type="strand" evidence="28">
    <location>
        <begin position="416"/>
        <end position="421"/>
    </location>
</feature>
<feature type="helix" evidence="28">
    <location>
        <begin position="428"/>
        <end position="439"/>
    </location>
</feature>
<feature type="turn" evidence="28">
    <location>
        <begin position="443"/>
        <end position="445"/>
    </location>
</feature>
<feature type="strand" evidence="28">
    <location>
        <begin position="448"/>
        <end position="454"/>
    </location>
</feature>
<feature type="helix" evidence="28">
    <location>
        <begin position="455"/>
        <end position="468"/>
    </location>
</feature>
<feature type="turn" evidence="28">
    <location>
        <begin position="474"/>
        <end position="476"/>
    </location>
</feature>
<feature type="strand" evidence="28">
    <location>
        <begin position="477"/>
        <end position="481"/>
    </location>
</feature>
<feature type="strand" evidence="28">
    <location>
        <begin position="484"/>
        <end position="486"/>
    </location>
</feature>
<feature type="strand" evidence="28">
    <location>
        <begin position="493"/>
        <end position="497"/>
    </location>
</feature>
<feature type="helix" evidence="28">
    <location>
        <begin position="498"/>
        <end position="507"/>
    </location>
</feature>
<feature type="strand" evidence="28">
    <location>
        <begin position="515"/>
        <end position="520"/>
    </location>
</feature>
<feature type="helix" evidence="28">
    <location>
        <begin position="522"/>
        <end position="524"/>
    </location>
</feature>
<feature type="helix" evidence="28">
    <location>
        <begin position="527"/>
        <end position="542"/>
    </location>
</feature>
<feature type="strand" evidence="28">
    <location>
        <begin position="547"/>
        <end position="555"/>
    </location>
</feature>
<feature type="helix" evidence="28">
    <location>
        <begin position="558"/>
        <end position="563"/>
    </location>
</feature>
<feature type="strand" evidence="28">
    <location>
        <begin position="569"/>
        <end position="571"/>
    </location>
</feature>
<feature type="strand" evidence="28">
    <location>
        <begin position="579"/>
        <end position="583"/>
    </location>
</feature>
<feature type="helix" evidence="28">
    <location>
        <begin position="592"/>
        <end position="605"/>
    </location>
</feature>
<feature type="strand" evidence="28">
    <location>
        <begin position="610"/>
        <end position="614"/>
    </location>
</feature>
<feature type="helix" evidence="28">
    <location>
        <begin position="618"/>
        <end position="635"/>
    </location>
</feature>
<feature type="strand" evidence="29">
    <location>
        <begin position="636"/>
        <end position="639"/>
    </location>
</feature>
<feature type="strand" evidence="28">
    <location>
        <begin position="642"/>
        <end position="647"/>
    </location>
</feature>
<feature type="strand" evidence="29">
    <location>
        <begin position="649"/>
        <end position="651"/>
    </location>
</feature>
<feature type="helix" evidence="28">
    <location>
        <begin position="653"/>
        <end position="656"/>
    </location>
</feature>
<feature type="helix" evidence="28">
    <location>
        <begin position="657"/>
        <end position="660"/>
    </location>
</feature>
<feature type="strand" evidence="28">
    <location>
        <begin position="668"/>
        <end position="673"/>
    </location>
</feature>
<feature type="helix" evidence="28">
    <location>
        <begin position="676"/>
        <end position="679"/>
    </location>
</feature>
<feature type="strand" evidence="28">
    <location>
        <begin position="686"/>
        <end position="691"/>
    </location>
</feature>
<feature type="strand" evidence="28">
    <location>
        <begin position="694"/>
        <end position="701"/>
    </location>
</feature>
<feature type="turn" evidence="28">
    <location>
        <begin position="702"/>
        <end position="705"/>
    </location>
</feature>
<feature type="strand" evidence="28">
    <location>
        <begin position="706"/>
        <end position="713"/>
    </location>
</feature>
<feature type="helix" evidence="28">
    <location>
        <begin position="716"/>
        <end position="722"/>
    </location>
</feature>
<feature type="helix" evidence="28">
    <location>
        <begin position="723"/>
        <end position="727"/>
    </location>
</feature>
<feature type="strand" evidence="28">
    <location>
        <begin position="728"/>
        <end position="730"/>
    </location>
</feature>
<feature type="strand" evidence="28">
    <location>
        <begin position="732"/>
        <end position="738"/>
    </location>
</feature>
<feature type="helix" evidence="28">
    <location>
        <begin position="740"/>
        <end position="744"/>
    </location>
</feature>
<feature type="strand" evidence="29">
    <location>
        <begin position="747"/>
        <end position="750"/>
    </location>
</feature>
<feature type="helix" evidence="28">
    <location>
        <begin position="754"/>
        <end position="756"/>
    </location>
</feature>
<feature type="helix" evidence="28">
    <location>
        <begin position="761"/>
        <end position="767"/>
    </location>
</feature>
<feature type="turn" evidence="28">
    <location>
        <begin position="768"/>
        <end position="771"/>
    </location>
</feature>
<feature type="strand" evidence="28">
    <location>
        <begin position="775"/>
        <end position="777"/>
    </location>
</feature>
<feature type="helix" evidence="28">
    <location>
        <begin position="786"/>
        <end position="798"/>
    </location>
</feature>
<feature type="turn" evidence="29">
    <location>
        <begin position="799"/>
        <end position="801"/>
    </location>
</feature>
<feature type="helix" evidence="28">
    <location>
        <begin position="810"/>
        <end position="815"/>
    </location>
</feature>
<feature type="strand" evidence="28">
    <location>
        <begin position="818"/>
        <end position="820"/>
    </location>
</feature>
<feature type="helix" evidence="28">
    <location>
        <begin position="822"/>
        <end position="830"/>
    </location>
</feature>
<feature type="turn" evidence="29">
    <location>
        <begin position="831"/>
        <end position="833"/>
    </location>
</feature>
<feature type="helix" evidence="28">
    <location>
        <begin position="837"/>
        <end position="847"/>
    </location>
</feature>
<feature type="helix" evidence="28">
    <location>
        <begin position="866"/>
        <end position="871"/>
    </location>
</feature>
<feature type="helix" evidence="28">
    <location>
        <begin position="878"/>
        <end position="888"/>
    </location>
</feature>
<feature type="turn" evidence="29">
    <location>
        <begin position="889"/>
        <end position="893"/>
    </location>
</feature>
<feature type="turn" evidence="28">
    <location>
        <begin position="899"/>
        <end position="902"/>
    </location>
</feature>
<feature type="helix" evidence="28">
    <location>
        <begin position="905"/>
        <end position="924"/>
    </location>
</feature>
<feature type="helix" evidence="28">
    <location>
        <begin position="935"/>
        <end position="946"/>
    </location>
</feature>
<feature type="turn" evidence="28">
    <location>
        <begin position="947"/>
        <end position="949"/>
    </location>
</feature>
<feature type="strand" evidence="28">
    <location>
        <begin position="950"/>
        <end position="953"/>
    </location>
</feature>
<feature type="strand" evidence="29">
    <location>
        <begin position="958"/>
        <end position="961"/>
    </location>
</feature>
<feature type="turn" evidence="29">
    <location>
        <begin position="962"/>
        <end position="964"/>
    </location>
</feature>
<feature type="strand" evidence="29">
    <location>
        <begin position="977"/>
        <end position="979"/>
    </location>
</feature>
<feature type="strand" evidence="28">
    <location>
        <begin position="984"/>
        <end position="1002"/>
    </location>
</feature>
<feature type="helix" evidence="28">
    <location>
        <begin position="1005"/>
        <end position="1011"/>
    </location>
</feature>
<feature type="helix" evidence="28">
    <location>
        <begin position="1013"/>
        <end position="1016"/>
    </location>
</feature>
<feature type="turn" evidence="28">
    <location>
        <begin position="1037"/>
        <end position="1039"/>
    </location>
</feature>
<comment type="function">
    <text evidence="5 6 7 8 11 15">Required for pre-mRNA splicing as a component of the spliceosome (PubMed:20423332, PubMed:20841358, PubMed:25296192, PubMed:29360106). Contributes to pre-mRNA splicing after spliceosome formation and prior to the first transesterification reaction. As a component of the minor spliceosome, involved in the splicing of U12-type introns in pre-mRNAs (Probable). Also plays a role in innate antiviral response by acting as a pattern recognition receptor sensing splicing signals in viral RNA (PubMed:35263596). Mechanistically, TRIM6 promotes the interaction between unanchored 'Lys-48'-polyubiquitin chains and DHX16, leading to DHX16 interaction with RIGI and ssRNA to amplify RIGI-dependent innate antiviral immune responses (PubMed:35263596).</text>
</comment>
<comment type="catalytic activity">
    <reaction>
        <text>ATP + H2O = ADP + phosphate + H(+)</text>
        <dbReference type="Rhea" id="RHEA:13065"/>
        <dbReference type="ChEBI" id="CHEBI:15377"/>
        <dbReference type="ChEBI" id="CHEBI:15378"/>
        <dbReference type="ChEBI" id="CHEBI:30616"/>
        <dbReference type="ChEBI" id="CHEBI:43474"/>
        <dbReference type="ChEBI" id="CHEBI:456216"/>
        <dbReference type="EC" id="3.6.4.13"/>
    </reaction>
</comment>
<comment type="subunit">
    <text evidence="5 6 7 8 10 11">Component of pre-catalytic spliceosome complexes (PubMed:20423332, PubMed:20841358, PubMed:25296192, PubMed:29360106). Component of the minor spliceosome, which splices U12-type introns (PubMed:33509932). Interacts with GPKOW. Interacts with TRIM6 (PubMed:35263596). Interacts with RIGI (PubMed:35263596).</text>
</comment>
<comment type="interaction">
    <interactant intactId="EBI-311446">
        <id>O60231</id>
    </interactant>
    <interactant intactId="EBI-1043041">
        <id>Q92620</id>
        <label>DHX38</label>
    </interactant>
    <organismsDiffer>false</organismsDiffer>
    <experiments>2</experiments>
</comment>
<comment type="interaction">
    <interactant intactId="EBI-311446">
        <id>O60231</id>
    </interactant>
    <interactant intactId="EBI-746309">
        <id>Q92917</id>
        <label>GPKOW</label>
    </interactant>
    <organismsDiffer>false</organismsDiffer>
    <experiments>6</experiments>
</comment>
<comment type="interaction">
    <interactant intactId="EBI-311446">
        <id>O60231</id>
    </interactant>
    <interactant intactId="EBI-749111">
        <id>Q13435</id>
        <label>SF3B2</label>
    </interactant>
    <organismsDiffer>false</organismsDiffer>
    <experiments>2</experiments>
</comment>
<comment type="interaction">
    <interactant intactId="EBI-311446">
        <id>O60231</id>
    </interactant>
    <interactant intactId="EBI-295232">
        <id>Q9HCS7</id>
        <label>XAB2</label>
    </interactant>
    <organismsDiffer>false</organismsDiffer>
    <experiments>2</experiments>
</comment>
<comment type="subcellular location">
    <subcellularLocation>
        <location evidence="5 6 7 8">Nucleus</location>
    </subcellularLocation>
    <subcellularLocation>
        <location evidence="5">Nucleus</location>
        <location evidence="5">Nucleoplasm</location>
    </subcellularLocation>
    <subcellularLocation>
        <location evidence="11">Cytoplasm</location>
    </subcellularLocation>
</comment>
<comment type="tissue specificity">
    <text evidence="9">Expressed in the spleen, thyroid and testis. Also expressed in the brain and cerebellum.</text>
</comment>
<comment type="disease" evidence="9">
    <disease id="DI-05734">
        <name>Neuromuscular oculoauditory syndrome</name>
        <acronym>NMOAS</acronym>
        <description>An autosomal dominant neuromuscular disorder characterized by variable features including myopathy, neuropathy, hypotonia, joint contractures, growth delay, chorioretinal lacunae, sensorineuronal deafness, agenesis of the corpus callosum, and seizures.</description>
        <dbReference type="MIM" id="618733"/>
    </disease>
    <text>The disease is caused by variants affecting the gene represented in this entry.</text>
</comment>
<comment type="similarity">
    <text evidence="14">Belongs to the DEAD box helicase family. DEAH subfamily. DDX16/PRP8 sub-subfamily.</text>
</comment>
<comment type="sequence caution" evidence="14">
    <conflict type="erroneous initiation">
        <sequence resource="EMBL-CDS" id="BAA25503"/>
    </conflict>
    <text>Extended N-terminus.</text>
</comment>
<name>DHX16_HUMAN</name>
<protein>
    <recommendedName>
        <fullName>Pre-mRNA-splicing factor ATP-dependent RNA helicase DHX16</fullName>
        <ecNumber>3.6.4.13</ecNumber>
    </recommendedName>
    <alternativeName>
        <fullName>ATP-dependent RNA helicase #3</fullName>
    </alternativeName>
    <alternativeName>
        <fullName>DEAH-box protein 16</fullName>
    </alternativeName>
</protein>